<reference key="1">
    <citation type="journal article" date="2002" name="Proc. Natl. Acad. Sci. U.S.A.">
        <title>Genome sequence of Streptococcus mutans UA159, a cariogenic dental pathogen.</title>
        <authorList>
            <person name="Ajdic D.J."/>
            <person name="McShan W.M."/>
            <person name="McLaughlin R.E."/>
            <person name="Savic G."/>
            <person name="Chang J."/>
            <person name="Carson M.B."/>
            <person name="Primeaux C."/>
            <person name="Tian R."/>
            <person name="Kenton S."/>
            <person name="Jia H.G."/>
            <person name="Lin S.P."/>
            <person name="Qian Y."/>
            <person name="Li S."/>
            <person name="Zhu H."/>
            <person name="Najar F.Z."/>
            <person name="Lai H."/>
            <person name="White J."/>
            <person name="Roe B.A."/>
            <person name="Ferretti J.J."/>
        </authorList>
    </citation>
    <scope>NUCLEOTIDE SEQUENCE [LARGE SCALE GENOMIC DNA]</scope>
    <source>
        <strain>ATCC 700610 / UA159</strain>
    </source>
</reference>
<proteinExistence type="inferred from homology"/>
<name>RS6_STRMU</name>
<organism>
    <name type="scientific">Streptococcus mutans serotype c (strain ATCC 700610 / UA159)</name>
    <dbReference type="NCBI Taxonomy" id="210007"/>
    <lineage>
        <taxon>Bacteria</taxon>
        <taxon>Bacillati</taxon>
        <taxon>Bacillota</taxon>
        <taxon>Bacilli</taxon>
        <taxon>Lactobacillales</taxon>
        <taxon>Streptococcaceae</taxon>
        <taxon>Streptococcus</taxon>
    </lineage>
</organism>
<evidence type="ECO:0000255" key="1">
    <source>
        <dbReference type="HAMAP-Rule" id="MF_00360"/>
    </source>
</evidence>
<evidence type="ECO:0000305" key="2"/>
<protein>
    <recommendedName>
        <fullName evidence="1">Small ribosomal subunit protein bS6</fullName>
    </recommendedName>
    <alternativeName>
        <fullName evidence="2">30S ribosomal protein S6</fullName>
    </alternativeName>
</protein>
<dbReference type="EMBL" id="AE014133">
    <property type="protein sequence ID" value="AAN59481.1"/>
    <property type="molecule type" value="Genomic_DNA"/>
</dbReference>
<dbReference type="RefSeq" id="NP_722175.1">
    <property type="nucleotide sequence ID" value="NC_004350.2"/>
</dbReference>
<dbReference type="RefSeq" id="WP_002261866.1">
    <property type="nucleotide sequence ID" value="NC_004350.2"/>
</dbReference>
<dbReference type="SMR" id="Q8DSD7"/>
<dbReference type="STRING" id="210007.SMU_1860"/>
<dbReference type="GeneID" id="93858725"/>
<dbReference type="KEGG" id="smu:SMU_1860"/>
<dbReference type="PATRIC" id="fig|210007.7.peg.1661"/>
<dbReference type="eggNOG" id="COG0360">
    <property type="taxonomic scope" value="Bacteria"/>
</dbReference>
<dbReference type="HOGENOM" id="CLU_113441_5_3_9"/>
<dbReference type="OrthoDB" id="9812702at2"/>
<dbReference type="PhylomeDB" id="Q8DSD7"/>
<dbReference type="Proteomes" id="UP000002512">
    <property type="component" value="Chromosome"/>
</dbReference>
<dbReference type="GO" id="GO:0005737">
    <property type="term" value="C:cytoplasm"/>
    <property type="evidence" value="ECO:0007669"/>
    <property type="project" value="UniProtKB-ARBA"/>
</dbReference>
<dbReference type="GO" id="GO:1990904">
    <property type="term" value="C:ribonucleoprotein complex"/>
    <property type="evidence" value="ECO:0007669"/>
    <property type="project" value="UniProtKB-KW"/>
</dbReference>
<dbReference type="GO" id="GO:0005840">
    <property type="term" value="C:ribosome"/>
    <property type="evidence" value="ECO:0007669"/>
    <property type="project" value="UniProtKB-KW"/>
</dbReference>
<dbReference type="GO" id="GO:0070181">
    <property type="term" value="F:small ribosomal subunit rRNA binding"/>
    <property type="evidence" value="ECO:0007669"/>
    <property type="project" value="TreeGrafter"/>
</dbReference>
<dbReference type="GO" id="GO:0003735">
    <property type="term" value="F:structural constituent of ribosome"/>
    <property type="evidence" value="ECO:0007669"/>
    <property type="project" value="InterPro"/>
</dbReference>
<dbReference type="GO" id="GO:0006412">
    <property type="term" value="P:translation"/>
    <property type="evidence" value="ECO:0007669"/>
    <property type="project" value="UniProtKB-UniRule"/>
</dbReference>
<dbReference type="CDD" id="cd00473">
    <property type="entry name" value="bS6"/>
    <property type="match status" value="1"/>
</dbReference>
<dbReference type="FunFam" id="3.30.70.60:FF:000002">
    <property type="entry name" value="30S ribosomal protein S6"/>
    <property type="match status" value="1"/>
</dbReference>
<dbReference type="Gene3D" id="3.30.70.60">
    <property type="match status" value="1"/>
</dbReference>
<dbReference type="HAMAP" id="MF_00360">
    <property type="entry name" value="Ribosomal_bS6"/>
    <property type="match status" value="1"/>
</dbReference>
<dbReference type="InterPro" id="IPR000529">
    <property type="entry name" value="Ribosomal_bS6"/>
</dbReference>
<dbReference type="InterPro" id="IPR035980">
    <property type="entry name" value="Ribosomal_bS6_sf"/>
</dbReference>
<dbReference type="InterPro" id="IPR020814">
    <property type="entry name" value="Ribosomal_S6_plastid/chlpt"/>
</dbReference>
<dbReference type="InterPro" id="IPR014717">
    <property type="entry name" value="Transl_elong_EF1B/ribsomal_bS6"/>
</dbReference>
<dbReference type="NCBIfam" id="TIGR00166">
    <property type="entry name" value="S6"/>
    <property type="match status" value="1"/>
</dbReference>
<dbReference type="PANTHER" id="PTHR21011">
    <property type="entry name" value="MITOCHONDRIAL 28S RIBOSOMAL PROTEIN S6"/>
    <property type="match status" value="1"/>
</dbReference>
<dbReference type="PANTHER" id="PTHR21011:SF1">
    <property type="entry name" value="SMALL RIBOSOMAL SUBUNIT PROTEIN BS6M"/>
    <property type="match status" value="1"/>
</dbReference>
<dbReference type="Pfam" id="PF01250">
    <property type="entry name" value="Ribosomal_S6"/>
    <property type="match status" value="1"/>
</dbReference>
<dbReference type="SUPFAM" id="SSF54995">
    <property type="entry name" value="Ribosomal protein S6"/>
    <property type="match status" value="1"/>
</dbReference>
<feature type="chain" id="PRO_0000176849" description="Small ribosomal subunit protein bS6">
    <location>
        <begin position="1"/>
        <end position="96"/>
    </location>
</feature>
<accession>Q8DSD7</accession>
<gene>
    <name evidence="1" type="primary">rpsF</name>
    <name type="synonym">rs6</name>
    <name type="ordered locus">SMU_1860</name>
</gene>
<sequence length="96" mass="11247">MAKYEILYIIRPNIEEEAKNALVARFDAVLTDNGATIVESKDWEKRRLAYEIQDFREGLYHVINVETEDAHALNEFDRLSKINNDILRHMIVKLDA</sequence>
<comment type="function">
    <text evidence="1">Binds together with bS18 to 16S ribosomal RNA.</text>
</comment>
<comment type="similarity">
    <text evidence="1">Belongs to the bacterial ribosomal protein bS6 family.</text>
</comment>
<keyword id="KW-1185">Reference proteome</keyword>
<keyword id="KW-0687">Ribonucleoprotein</keyword>
<keyword id="KW-0689">Ribosomal protein</keyword>
<keyword id="KW-0694">RNA-binding</keyword>
<keyword id="KW-0699">rRNA-binding</keyword>